<reference key="1">
    <citation type="journal article" date="2008" name="BMC Genomics">
        <title>The genome sequence of the fish pathogen Aliivibrio salmonicida strain LFI1238 shows extensive evidence of gene decay.</title>
        <authorList>
            <person name="Hjerde E."/>
            <person name="Lorentzen M.S."/>
            <person name="Holden M.T."/>
            <person name="Seeger K."/>
            <person name="Paulsen S."/>
            <person name="Bason N."/>
            <person name="Churcher C."/>
            <person name="Harris D."/>
            <person name="Norbertczak H."/>
            <person name="Quail M.A."/>
            <person name="Sanders S."/>
            <person name="Thurston S."/>
            <person name="Parkhill J."/>
            <person name="Willassen N.P."/>
            <person name="Thomson N.R."/>
        </authorList>
    </citation>
    <scope>NUCLEOTIDE SEQUENCE [LARGE SCALE GENOMIC DNA]</scope>
    <source>
        <strain>LFI1238</strain>
    </source>
</reference>
<feature type="chain" id="PRO_1000134677" description="Undecaprenyl-diphosphatase">
    <location>
        <begin position="1"/>
        <end position="267"/>
    </location>
</feature>
<feature type="transmembrane region" description="Helical" evidence="1">
    <location>
        <begin position="1"/>
        <end position="21"/>
    </location>
</feature>
<feature type="transmembrane region" description="Helical" evidence="1">
    <location>
        <begin position="39"/>
        <end position="59"/>
    </location>
</feature>
<feature type="transmembrane region" description="Helical" evidence="1">
    <location>
        <begin position="87"/>
        <end position="107"/>
    </location>
</feature>
<feature type="transmembrane region" description="Helical" evidence="1">
    <location>
        <begin position="111"/>
        <end position="131"/>
    </location>
</feature>
<feature type="transmembrane region" description="Helical" evidence="1">
    <location>
        <begin position="149"/>
        <end position="169"/>
    </location>
</feature>
<feature type="transmembrane region" description="Helical" evidence="1">
    <location>
        <begin position="189"/>
        <end position="209"/>
    </location>
</feature>
<feature type="transmembrane region" description="Helical" evidence="1">
    <location>
        <begin position="218"/>
        <end position="238"/>
    </location>
</feature>
<feature type="transmembrane region" description="Helical" evidence="1">
    <location>
        <begin position="246"/>
        <end position="266"/>
    </location>
</feature>
<proteinExistence type="inferred from homology"/>
<accession>B6EM11</accession>
<comment type="function">
    <text evidence="1">Catalyzes the dephosphorylation of undecaprenyl diphosphate (UPP). Confers resistance to bacitracin.</text>
</comment>
<comment type="catalytic activity">
    <reaction evidence="1">
        <text>di-trans,octa-cis-undecaprenyl diphosphate + H2O = di-trans,octa-cis-undecaprenyl phosphate + phosphate + H(+)</text>
        <dbReference type="Rhea" id="RHEA:28094"/>
        <dbReference type="ChEBI" id="CHEBI:15377"/>
        <dbReference type="ChEBI" id="CHEBI:15378"/>
        <dbReference type="ChEBI" id="CHEBI:43474"/>
        <dbReference type="ChEBI" id="CHEBI:58405"/>
        <dbReference type="ChEBI" id="CHEBI:60392"/>
        <dbReference type="EC" id="3.6.1.27"/>
    </reaction>
</comment>
<comment type="subcellular location">
    <subcellularLocation>
        <location evidence="1">Cell inner membrane</location>
        <topology evidence="1">Multi-pass membrane protein</topology>
    </subcellularLocation>
</comment>
<comment type="miscellaneous">
    <text>Bacitracin is thought to be involved in the inhibition of peptidoglycan synthesis by sequestering undecaprenyl diphosphate, thereby reducing the pool of lipid carrier available.</text>
</comment>
<comment type="similarity">
    <text evidence="1">Belongs to the UppP family.</text>
</comment>
<gene>
    <name evidence="1" type="primary">uppP</name>
    <name type="ordered locus">VSAL_I2690</name>
</gene>
<evidence type="ECO:0000255" key="1">
    <source>
        <dbReference type="HAMAP-Rule" id="MF_01006"/>
    </source>
</evidence>
<keyword id="KW-0046">Antibiotic resistance</keyword>
<keyword id="KW-0997">Cell inner membrane</keyword>
<keyword id="KW-1003">Cell membrane</keyword>
<keyword id="KW-0133">Cell shape</keyword>
<keyword id="KW-0961">Cell wall biogenesis/degradation</keyword>
<keyword id="KW-0378">Hydrolase</keyword>
<keyword id="KW-0472">Membrane</keyword>
<keyword id="KW-0573">Peptidoglycan synthesis</keyword>
<keyword id="KW-0812">Transmembrane</keyword>
<keyword id="KW-1133">Transmembrane helix</keyword>
<protein>
    <recommendedName>
        <fullName evidence="1">Undecaprenyl-diphosphatase</fullName>
        <ecNumber evidence="1">3.6.1.27</ecNumber>
    </recommendedName>
    <alternativeName>
        <fullName evidence="1">Bacitracin resistance protein</fullName>
    </alternativeName>
    <alternativeName>
        <fullName evidence="1">Undecaprenyl pyrophosphate phosphatase</fullName>
    </alternativeName>
</protein>
<name>UPPP_ALISL</name>
<dbReference type="EC" id="3.6.1.27" evidence="1"/>
<dbReference type="EMBL" id="FM178379">
    <property type="protein sequence ID" value="CAQ80374.1"/>
    <property type="molecule type" value="Genomic_DNA"/>
</dbReference>
<dbReference type="RefSeq" id="WP_012551142.1">
    <property type="nucleotide sequence ID" value="NC_011312.1"/>
</dbReference>
<dbReference type="SMR" id="B6EM11"/>
<dbReference type="KEGG" id="vsa:VSAL_I2690"/>
<dbReference type="eggNOG" id="COG1968">
    <property type="taxonomic scope" value="Bacteria"/>
</dbReference>
<dbReference type="HOGENOM" id="CLU_060296_1_0_6"/>
<dbReference type="Proteomes" id="UP000001730">
    <property type="component" value="Chromosome 1"/>
</dbReference>
<dbReference type="GO" id="GO:0005886">
    <property type="term" value="C:plasma membrane"/>
    <property type="evidence" value="ECO:0007669"/>
    <property type="project" value="UniProtKB-SubCell"/>
</dbReference>
<dbReference type="GO" id="GO:0050380">
    <property type="term" value="F:undecaprenyl-diphosphatase activity"/>
    <property type="evidence" value="ECO:0007669"/>
    <property type="project" value="UniProtKB-UniRule"/>
</dbReference>
<dbReference type="GO" id="GO:0071555">
    <property type="term" value="P:cell wall organization"/>
    <property type="evidence" value="ECO:0007669"/>
    <property type="project" value="UniProtKB-KW"/>
</dbReference>
<dbReference type="GO" id="GO:0009252">
    <property type="term" value="P:peptidoglycan biosynthetic process"/>
    <property type="evidence" value="ECO:0007669"/>
    <property type="project" value="UniProtKB-KW"/>
</dbReference>
<dbReference type="GO" id="GO:0008360">
    <property type="term" value="P:regulation of cell shape"/>
    <property type="evidence" value="ECO:0007669"/>
    <property type="project" value="UniProtKB-KW"/>
</dbReference>
<dbReference type="GO" id="GO:0046677">
    <property type="term" value="P:response to antibiotic"/>
    <property type="evidence" value="ECO:0007669"/>
    <property type="project" value="UniProtKB-UniRule"/>
</dbReference>
<dbReference type="HAMAP" id="MF_01006">
    <property type="entry name" value="Undec_diphosphatase"/>
    <property type="match status" value="1"/>
</dbReference>
<dbReference type="InterPro" id="IPR003824">
    <property type="entry name" value="UppP"/>
</dbReference>
<dbReference type="NCBIfam" id="NF001393">
    <property type="entry name" value="PRK00281.2-4"/>
    <property type="match status" value="1"/>
</dbReference>
<dbReference type="NCBIfam" id="TIGR00753">
    <property type="entry name" value="undec_PP_bacA"/>
    <property type="match status" value="1"/>
</dbReference>
<dbReference type="PANTHER" id="PTHR30622">
    <property type="entry name" value="UNDECAPRENYL-DIPHOSPHATASE"/>
    <property type="match status" value="1"/>
</dbReference>
<dbReference type="PANTHER" id="PTHR30622:SF4">
    <property type="entry name" value="UNDECAPRENYL-DIPHOSPHATASE"/>
    <property type="match status" value="1"/>
</dbReference>
<dbReference type="Pfam" id="PF02673">
    <property type="entry name" value="BacA"/>
    <property type="match status" value="1"/>
</dbReference>
<organism>
    <name type="scientific">Aliivibrio salmonicida (strain LFI1238)</name>
    <name type="common">Vibrio salmonicida (strain LFI1238)</name>
    <dbReference type="NCBI Taxonomy" id="316275"/>
    <lineage>
        <taxon>Bacteria</taxon>
        <taxon>Pseudomonadati</taxon>
        <taxon>Pseudomonadota</taxon>
        <taxon>Gammaproteobacteria</taxon>
        <taxon>Vibrionales</taxon>
        <taxon>Vibrionaceae</taxon>
        <taxon>Aliivibrio</taxon>
    </lineage>
</organism>
<sequence>MTYFEAFFLALLQGFTEFLPISSSAHLILPSEVLGWSDQGLAFDVAVHVGTLAAVVMYFRKEVVTLLSAWTFSIVKKEHNKESKLAWLIILSTIPAAVCGLMFKDFIEVYLRSAWVIAITTIVFGLLLWWVDKNSTLVKDEYEMTWKKALFLGIAQAAAMIPGTSRSGITITAALYLGFTREAAARFSFLMSIPIITLAGSYLGLKLALSDAIIHFGFLGTGIIVSFISAYICIHFFLKLISSMGMTPFVIYRLLLGTSLLAWLALT</sequence>